<dbReference type="EMBL" id="D14875">
    <property type="protein sequence ID" value="BAA03590.1"/>
    <property type="molecule type" value="mRNA"/>
</dbReference>
<dbReference type="PIR" id="S41600">
    <property type="entry name" value="S41600"/>
</dbReference>
<dbReference type="RefSeq" id="NP_999272.1">
    <property type="nucleotide sequence ID" value="NM_214107.1"/>
</dbReference>
<dbReference type="SMR" id="P53366"/>
<dbReference type="FunCoup" id="P53366">
    <property type="interactions" value="148"/>
</dbReference>
<dbReference type="STRING" id="9823.ENSSSCP00000014253"/>
<dbReference type="PaxDb" id="9823-ENSSSCP00000014253"/>
<dbReference type="Ensembl" id="ENSSSCT00000014648.4">
    <property type="protein sequence ID" value="ENSSSCP00000014253.2"/>
    <property type="gene ID" value="ENSSSCG00000013408.4"/>
</dbReference>
<dbReference type="Ensembl" id="ENSSSCT00015085686.1">
    <property type="protein sequence ID" value="ENSSSCP00015034825.1"/>
    <property type="gene ID" value="ENSSSCG00015063932.1"/>
</dbReference>
<dbReference type="Ensembl" id="ENSSSCT00025029364.1">
    <property type="protein sequence ID" value="ENSSSCP00025012475.1"/>
    <property type="gene ID" value="ENSSSCG00025021598.1"/>
</dbReference>
<dbReference type="Ensembl" id="ENSSSCT00030030777.1">
    <property type="protein sequence ID" value="ENSSSCP00030013830.1"/>
    <property type="gene ID" value="ENSSSCG00030022171.1"/>
</dbReference>
<dbReference type="Ensembl" id="ENSSSCT00035036738.1">
    <property type="protein sequence ID" value="ENSSSCP00035014630.1"/>
    <property type="gene ID" value="ENSSSCG00035027779.1"/>
</dbReference>
<dbReference type="Ensembl" id="ENSSSCT00040063807.1">
    <property type="protein sequence ID" value="ENSSSCP00040026947.1"/>
    <property type="gene ID" value="ENSSSCG00040047373.1"/>
</dbReference>
<dbReference type="Ensembl" id="ENSSSCT00045026751.1">
    <property type="protein sequence ID" value="ENSSSCP00045018467.1"/>
    <property type="gene ID" value="ENSSSCG00045015757.1"/>
</dbReference>
<dbReference type="Ensembl" id="ENSSSCT00050061343.1">
    <property type="protein sequence ID" value="ENSSSCP00050026375.1"/>
    <property type="gene ID" value="ENSSSCG00050045069.1"/>
</dbReference>
<dbReference type="Ensembl" id="ENSSSCT00055038917.1">
    <property type="protein sequence ID" value="ENSSSCP00055030947.1"/>
    <property type="gene ID" value="ENSSSCG00055019852.1"/>
</dbReference>
<dbReference type="Ensembl" id="ENSSSCT00060045441.1">
    <property type="protein sequence ID" value="ENSSSCP00060019461.1"/>
    <property type="gene ID" value="ENSSSCG00060033515.1"/>
</dbReference>
<dbReference type="Ensembl" id="ENSSSCT00065110018.1">
    <property type="protein sequence ID" value="ENSSSCP00065049518.1"/>
    <property type="gene ID" value="ENSSSCG00065079164.1"/>
</dbReference>
<dbReference type="Ensembl" id="ENSSSCT00070024668.1">
    <property type="protein sequence ID" value="ENSSSCP00070020418.1"/>
    <property type="gene ID" value="ENSSSCG00070012637.1"/>
</dbReference>
<dbReference type="Ensembl" id="ENSSSCT00085050260">
    <property type="protein sequence ID" value="ENSSSCP00085035183"/>
    <property type="gene ID" value="ENSSSCG00085026152"/>
</dbReference>
<dbReference type="Ensembl" id="ENSSSCT00090035858">
    <property type="protein sequence ID" value="ENSSSCP00090022324"/>
    <property type="gene ID" value="ENSSSCG00090020238"/>
</dbReference>
<dbReference type="Ensembl" id="ENSSSCT00105042922">
    <property type="protein sequence ID" value="ENSSSCP00105029862"/>
    <property type="gene ID" value="ENSSSCG00105022575"/>
</dbReference>
<dbReference type="Ensembl" id="ENSSSCT00110030878">
    <property type="protein sequence ID" value="ENSSSCP00110020956"/>
    <property type="gene ID" value="ENSSSCG00110016175"/>
</dbReference>
<dbReference type="Ensembl" id="ENSSSCT00115009383">
    <property type="protein sequence ID" value="ENSSSCP00115008813"/>
    <property type="gene ID" value="ENSSSCG00115005444"/>
</dbReference>
<dbReference type="Ensembl" id="ENSSSCT00130049491">
    <property type="protein sequence ID" value="ENSSSCP00130035055"/>
    <property type="gene ID" value="ENSSSCG00130025488"/>
</dbReference>
<dbReference type="GeneID" id="397195"/>
<dbReference type="KEGG" id="ssc:397195"/>
<dbReference type="CTD" id="133"/>
<dbReference type="VGNC" id="VGNC:85144">
    <property type="gene designation" value="ADM"/>
</dbReference>
<dbReference type="eggNOG" id="ENOG502S4SF">
    <property type="taxonomic scope" value="Eukaryota"/>
</dbReference>
<dbReference type="GeneTree" id="ENSGT00940000154380"/>
<dbReference type="HOGENOM" id="CLU_099291_1_0_1"/>
<dbReference type="InParanoid" id="P53366"/>
<dbReference type="OMA" id="QSFLYCC"/>
<dbReference type="OrthoDB" id="8771893at2759"/>
<dbReference type="TreeFam" id="TF333447"/>
<dbReference type="Reactome" id="R-SSC-418555">
    <property type="pathway name" value="G alpha (s) signalling events"/>
</dbReference>
<dbReference type="Reactome" id="R-SSC-419812">
    <property type="pathway name" value="Calcitonin-like ligand receptors"/>
</dbReference>
<dbReference type="Reactome" id="R-SSC-9856530">
    <property type="pathway name" value="High laminar flow shear stress activates signaling by PIEZO1 and PECAM1:CDH5:KDR in endothelial cells"/>
</dbReference>
<dbReference type="Proteomes" id="UP000008227">
    <property type="component" value="Chromosome 2"/>
</dbReference>
<dbReference type="Proteomes" id="UP000314985">
    <property type="component" value="Chromosome 2"/>
</dbReference>
<dbReference type="Proteomes" id="UP000694570">
    <property type="component" value="Unplaced"/>
</dbReference>
<dbReference type="Proteomes" id="UP000694571">
    <property type="component" value="Unplaced"/>
</dbReference>
<dbReference type="Proteomes" id="UP000694720">
    <property type="component" value="Unplaced"/>
</dbReference>
<dbReference type="Proteomes" id="UP000694722">
    <property type="component" value="Unplaced"/>
</dbReference>
<dbReference type="Proteomes" id="UP000694723">
    <property type="component" value="Unplaced"/>
</dbReference>
<dbReference type="Proteomes" id="UP000694724">
    <property type="component" value="Unplaced"/>
</dbReference>
<dbReference type="Proteomes" id="UP000694725">
    <property type="component" value="Unplaced"/>
</dbReference>
<dbReference type="Proteomes" id="UP000694726">
    <property type="component" value="Unplaced"/>
</dbReference>
<dbReference type="Proteomes" id="UP000694727">
    <property type="component" value="Unplaced"/>
</dbReference>
<dbReference type="Proteomes" id="UP000694728">
    <property type="component" value="Unplaced"/>
</dbReference>
<dbReference type="Bgee" id="ENSSSCG00000013408">
    <property type="expression patterns" value="Expressed in granulosa cell and 39 other cell types or tissues"/>
</dbReference>
<dbReference type="GO" id="GO:0005737">
    <property type="term" value="C:cytoplasm"/>
    <property type="evidence" value="ECO:0007669"/>
    <property type="project" value="Ensembl"/>
</dbReference>
<dbReference type="GO" id="GO:0005615">
    <property type="term" value="C:extracellular space"/>
    <property type="evidence" value="ECO:0000318"/>
    <property type="project" value="GO_Central"/>
</dbReference>
<dbReference type="GO" id="GO:0031700">
    <property type="term" value="F:adrenomedullin receptor binding"/>
    <property type="evidence" value="ECO:0000318"/>
    <property type="project" value="GO_Central"/>
</dbReference>
<dbReference type="GO" id="GO:0005179">
    <property type="term" value="F:hormone activity"/>
    <property type="evidence" value="ECO:0007669"/>
    <property type="project" value="UniProtKB-KW"/>
</dbReference>
<dbReference type="GO" id="GO:0007189">
    <property type="term" value="P:adenylate cyclase-activating G protein-coupled receptor signaling pathway"/>
    <property type="evidence" value="ECO:0000318"/>
    <property type="project" value="GO_Central"/>
</dbReference>
<dbReference type="GO" id="GO:1990410">
    <property type="term" value="P:adrenomedullin receptor signaling pathway"/>
    <property type="evidence" value="ECO:0000318"/>
    <property type="project" value="GO_Central"/>
</dbReference>
<dbReference type="GO" id="GO:0060670">
    <property type="term" value="P:branching involved in labyrinthine layer morphogenesis"/>
    <property type="evidence" value="ECO:0007669"/>
    <property type="project" value="Ensembl"/>
</dbReference>
<dbReference type="GO" id="GO:0008283">
    <property type="term" value="P:cell population proliferation"/>
    <property type="evidence" value="ECO:0007669"/>
    <property type="project" value="Ensembl"/>
</dbReference>
<dbReference type="GO" id="GO:0048589">
    <property type="term" value="P:developmental growth"/>
    <property type="evidence" value="ECO:0007669"/>
    <property type="project" value="Ensembl"/>
</dbReference>
<dbReference type="GO" id="GO:0002031">
    <property type="term" value="P:G protein-coupled receptor internalization"/>
    <property type="evidence" value="ECO:0007669"/>
    <property type="project" value="Ensembl"/>
</dbReference>
<dbReference type="GO" id="GO:0007507">
    <property type="term" value="P:heart development"/>
    <property type="evidence" value="ECO:0007669"/>
    <property type="project" value="Ensembl"/>
</dbReference>
<dbReference type="GO" id="GO:0043116">
    <property type="term" value="P:negative regulation of vascular permeability"/>
    <property type="evidence" value="ECO:0007669"/>
    <property type="project" value="Ensembl"/>
</dbReference>
<dbReference type="GO" id="GO:0045906">
    <property type="term" value="P:negative regulation of vasoconstriction"/>
    <property type="evidence" value="ECO:0007669"/>
    <property type="project" value="Ensembl"/>
</dbReference>
<dbReference type="GO" id="GO:0001843">
    <property type="term" value="P:neural tube closure"/>
    <property type="evidence" value="ECO:0007669"/>
    <property type="project" value="Ensembl"/>
</dbReference>
<dbReference type="GO" id="GO:0045766">
    <property type="term" value="P:positive regulation of angiogenesis"/>
    <property type="evidence" value="ECO:0007669"/>
    <property type="project" value="Ensembl"/>
</dbReference>
<dbReference type="GO" id="GO:0008284">
    <property type="term" value="P:positive regulation of cell population proliferation"/>
    <property type="evidence" value="ECO:0007669"/>
    <property type="project" value="Ensembl"/>
</dbReference>
<dbReference type="GO" id="GO:0010460">
    <property type="term" value="P:positive regulation of heart rate"/>
    <property type="evidence" value="ECO:0000318"/>
    <property type="project" value="GO_Central"/>
</dbReference>
<dbReference type="GO" id="GO:2001214">
    <property type="term" value="P:positive regulation of vasculogenesis"/>
    <property type="evidence" value="ECO:0007669"/>
    <property type="project" value="Ensembl"/>
</dbReference>
<dbReference type="GO" id="GO:0003073">
    <property type="term" value="P:regulation of systemic arterial blood pressure"/>
    <property type="evidence" value="ECO:0000318"/>
    <property type="project" value="GO_Central"/>
</dbReference>
<dbReference type="GO" id="GO:0035809">
    <property type="term" value="P:regulation of urine volume"/>
    <property type="evidence" value="ECO:0007669"/>
    <property type="project" value="Ensembl"/>
</dbReference>
<dbReference type="GO" id="GO:0097084">
    <property type="term" value="P:vascular associated smooth muscle cell development"/>
    <property type="evidence" value="ECO:0007669"/>
    <property type="project" value="Ensembl"/>
</dbReference>
<dbReference type="GO" id="GO:0001570">
    <property type="term" value="P:vasculogenesis"/>
    <property type="evidence" value="ECO:0007669"/>
    <property type="project" value="Ensembl"/>
</dbReference>
<dbReference type="InterPro" id="IPR051665">
    <property type="entry name" value="Adrenomedullin-reg_peptide"/>
</dbReference>
<dbReference type="InterPro" id="IPR021116">
    <property type="entry name" value="Calcitonin/adrenomedullin"/>
</dbReference>
<dbReference type="InterPro" id="IPR001710">
    <property type="entry name" value="Pro-ADM"/>
</dbReference>
<dbReference type="PANTHER" id="PTHR23414">
    <property type="entry name" value="ADRENOMEDULLIN, ADM"/>
    <property type="match status" value="1"/>
</dbReference>
<dbReference type="PANTHER" id="PTHR23414:SF3">
    <property type="entry name" value="PRO-ADRENOMEDULLIN"/>
    <property type="match status" value="1"/>
</dbReference>
<dbReference type="Pfam" id="PF00214">
    <property type="entry name" value="Calc_CGRP_IAPP"/>
    <property type="match status" value="1"/>
</dbReference>
<dbReference type="PRINTS" id="PR00801">
    <property type="entry name" value="ADRENOMEDULN"/>
</dbReference>
<gene>
    <name type="primary">ADM</name>
    <name type="synonym">AM</name>
</gene>
<keyword id="KW-0027">Amidation</keyword>
<keyword id="KW-0165">Cleavage on pair of basic residues</keyword>
<keyword id="KW-0903">Direct protein sequencing</keyword>
<keyword id="KW-1015">Disulfide bond</keyword>
<keyword id="KW-0372">Hormone</keyword>
<keyword id="KW-1185">Reference proteome</keyword>
<keyword id="KW-0964">Secreted</keyword>
<keyword id="KW-0732">Signal</keyword>
<organism>
    <name type="scientific">Sus scrofa</name>
    <name type="common">Pig</name>
    <dbReference type="NCBI Taxonomy" id="9823"/>
    <lineage>
        <taxon>Eukaryota</taxon>
        <taxon>Metazoa</taxon>
        <taxon>Chordata</taxon>
        <taxon>Craniata</taxon>
        <taxon>Vertebrata</taxon>
        <taxon>Euteleostomi</taxon>
        <taxon>Mammalia</taxon>
        <taxon>Eutheria</taxon>
        <taxon>Laurasiatheria</taxon>
        <taxon>Artiodactyla</taxon>
        <taxon>Suina</taxon>
        <taxon>Suidae</taxon>
        <taxon>Sus</taxon>
    </lineage>
</organism>
<name>ADML_PIG</name>
<comment type="function">
    <text evidence="1">Adrenomedullin/ADM and proadrenomedullin N-20 terminal peptide/PAMP are peptide hormones that act as potent hypotensive and vasodilatator agents. Numerous actions have been reported most related to the physiologic control of fluid and electrolyte homeostasis.</text>
</comment>
<comment type="function">
    <molecule>Adrenomedullin</molecule>
    <text evidence="1">ADM function is mediated by the CALCRL-RAMP2 and CALCRL-RAMP3 receptor complexes with ADM showing the highest potency for the CALCRL-RAMP2 complex.</text>
</comment>
<comment type="subcellular location">
    <subcellularLocation>
        <location evidence="1">Secreted</location>
    </subcellularLocation>
</comment>
<comment type="tissue specificity">
    <molecule>Adrenomedullin</molecule>
    <text evidence="4">Highly expressed in adrenal glands, lung and kidney.</text>
</comment>
<comment type="similarity">
    <text evidence="8">Belongs to the adrenomedullin family.</text>
</comment>
<sequence length="188" mass="20893">MKLVPVALMYLGSLAFLGADTARLDVAAEFRKKWNKWALSRGKRELRLSSSYPTGIADLKAGPAQTVIRPQDVKGSSRSPQASIPDAARIRVKRYRQSMNNFQGLRSFGCRFGTCTVQKLAHQIYQFTDKDKDGVAPRSKISPQGYGRRRRRSLPEASLGRTLRSQEPQAHGAPASPAHQVLATLFRI</sequence>
<feature type="signal peptide" evidence="5">
    <location>
        <begin position="1"/>
        <end position="21"/>
    </location>
</feature>
<feature type="peptide" id="PRO_0000000969" description="Proadrenomedullin N-20 terminal peptide" evidence="2">
    <location>
        <begin position="22"/>
        <end position="41"/>
    </location>
</feature>
<feature type="propeptide" id="PRO_0000000970" evidence="2">
    <location>
        <begin position="45"/>
        <end position="92"/>
    </location>
</feature>
<feature type="peptide" id="PRO_0000000971" description="Adrenomedullin" evidence="1">
    <location>
        <begin position="95"/>
        <end position="146"/>
    </location>
</feature>
<feature type="propeptide" id="PRO_0000000972" description="PreproAM C-terminal fragment" evidence="2">
    <location>
        <begin position="153"/>
        <end position="188"/>
    </location>
</feature>
<feature type="region of interest" description="Disordered" evidence="3">
    <location>
        <begin position="131"/>
        <end position="177"/>
    </location>
</feature>
<feature type="site" description="Required for CALCRL receptor interaction" evidence="1">
    <location>
        <position position="116"/>
    </location>
</feature>
<feature type="site" description="Required for CALCRL receptor interaction" evidence="1">
    <location>
        <position position="125"/>
    </location>
</feature>
<feature type="modified residue" description="Arginine amide" evidence="1">
    <location>
        <position position="41"/>
    </location>
</feature>
<feature type="modified residue" description="Tyrosine amide" evidence="1">
    <location>
        <position position="146"/>
    </location>
</feature>
<feature type="disulfide bond" evidence="1">
    <location>
        <begin position="110"/>
        <end position="115"/>
    </location>
</feature>
<protein>
    <recommendedName>
        <fullName>Pro-adrenomedullin</fullName>
    </recommendedName>
    <component>
        <recommendedName>
            <fullName evidence="6">Adrenomedullin</fullName>
            <shortName>AM</shortName>
        </recommendedName>
    </component>
    <component>
        <recommendedName>
            <fullName evidence="7">Proadrenomedullin N-20 terminal peptide</fullName>
        </recommendedName>
        <alternativeName>
            <fullName evidence="1">ProAM N-terminal 20 peptide</fullName>
            <shortName evidence="7">PAMP</shortName>
            <shortName evidence="6">ProAM-N20</shortName>
        </alternativeName>
    </component>
</protein>
<proteinExistence type="evidence at protein level"/>
<accession>P53366</accession>
<evidence type="ECO:0000250" key="1">
    <source>
        <dbReference type="UniProtKB" id="P35318"/>
    </source>
</evidence>
<evidence type="ECO:0000250" key="2">
    <source>
        <dbReference type="UniProtKB" id="P43145"/>
    </source>
</evidence>
<evidence type="ECO:0000256" key="3">
    <source>
        <dbReference type="SAM" id="MobiDB-lite"/>
    </source>
</evidence>
<evidence type="ECO:0000269" key="4">
    <source>
    </source>
</evidence>
<evidence type="ECO:0000269" key="5">
    <source>
    </source>
</evidence>
<evidence type="ECO:0000303" key="6">
    <source>
    </source>
</evidence>
<evidence type="ECO:0000303" key="7">
    <source>
    </source>
</evidence>
<evidence type="ECO:0000305" key="8"/>
<reference key="1">
    <citation type="journal article" date="1994" name="FEBS Lett.">
        <title>Complete amino acid sequence of porcine adrenomedullin and cloning of cDNA encoding its precursor.</title>
        <authorList>
            <person name="Kitamura K."/>
            <person name="Kangawa K."/>
            <person name="Kojima M."/>
            <person name="Ichiki Y."/>
            <person name="Matsuo H."/>
            <person name="Eto T."/>
        </authorList>
    </citation>
    <scope>NUCLEOTIDE SEQUENCE [MRNA]</scope>
    <scope>TISSUE SPECIFICITY</scope>
    <source>
        <tissue>Adrenal medulla</tissue>
    </source>
</reference>
<reference key="2">
    <citation type="journal article" date="1994" name="FEBS Lett.">
        <title>Identification and hypotensive activity of proadrenomedullin N-terminal 20 peptide (PAMP).</title>
        <authorList>
            <person name="Kitamura K."/>
            <person name="Kangawa K."/>
            <person name="Ishiyama Y."/>
            <person name="Washimine H."/>
            <person name="Ichiki Y."/>
            <person name="Kawamoto M."/>
            <person name="Minamino N."/>
            <person name="Matsuo H."/>
            <person name="Eto T."/>
        </authorList>
    </citation>
    <scope>PROTEIN SEQUENCE OF 22-41</scope>
    <source>
        <tissue>Adrenal medulla</tissue>
    </source>
</reference>